<evidence type="ECO:0000250" key="1">
    <source>
        <dbReference type="UniProtKB" id="P02722"/>
    </source>
</evidence>
<evidence type="ECO:0000250" key="2">
    <source>
        <dbReference type="UniProtKB" id="P22292"/>
    </source>
</evidence>
<evidence type="ECO:0000250" key="3">
    <source>
        <dbReference type="UniProtKB" id="P97700"/>
    </source>
</evidence>
<evidence type="ECO:0000250" key="4">
    <source>
        <dbReference type="UniProtKB" id="Q02978"/>
    </source>
</evidence>
<evidence type="ECO:0000255" key="5">
    <source>
        <dbReference type="PROSITE-ProRule" id="PRU00282"/>
    </source>
</evidence>
<evidence type="ECO:0000255" key="6">
    <source>
        <dbReference type="RuleBase" id="RU000488"/>
    </source>
</evidence>
<evidence type="ECO:0000269" key="7">
    <source>
    </source>
</evidence>
<evidence type="ECO:0000269" key="8">
    <source>
    </source>
</evidence>
<evidence type="ECO:0000303" key="9">
    <source>
    </source>
</evidence>
<evidence type="ECO:0000303" key="10">
    <source>
    </source>
</evidence>
<evidence type="ECO:0000305" key="11"/>
<evidence type="ECO:0000312" key="12">
    <source>
        <dbReference type="Proteomes" id="UP000001940"/>
    </source>
</evidence>
<evidence type="ECO:0000312" key="13">
    <source>
        <dbReference type="WormBase" id="B0432.4"/>
    </source>
</evidence>
<sequence length="306" mass="33308">MSNEGGVPNVVKFAFGGTAGMGATLVVQPLDLVKNRMQLSGTTGKKEYRSSMHALTSIMKNEGVFAVYNGLSAGLLRQATYTTTRLGTYAFLLERFTEKDKPLSFGMKAVLGMTAGGIGSFVGTPAEIALIRMTGDGRLPVEQRRNYTGVVNALTRITKEEGVLTLWRGCTPTVLRAMVVNAAQLATYSQAKQALLASGKVQDGIFCHFLASMISGLATTIASMPVDIAKTRIQSMKVIDGKPEYKNAFDVWGKVIKNEGIFALWKGFTPYYMRLGPHTVLTFIILEQMNAAYFQYVLKRDVTSAL</sequence>
<comment type="function">
    <text evidence="2 7 8">Catalyzes the transport of 2-oxoglutarate (alpha-oxoglutarate) across the inner mitochondrial membrane in an electroneutral exchange for malate. Can also exchange 2-oxoglutarate for other dicarboxylic acids such as malonate, succinate, maleate and oxaloacetate, although with lower affinity. Contributes to several metabolic processes, including the malate-aspartate shuttle, the oxoglutarate/isocitrate shuttle, in gluconeogenesis from lactate, and in nitrogen metabolism (By similarity). Maintains mitochondrial fusion and fission events, and the organization and morphology of cristae (PubMed:21448454). Regulator of apoptosis, insulin secretion and germline proliferation (PubMed:21448454). Furthermore, plays a role in the oxidative stress response regulating endogenous levels of reactive oxygen species (ROS) (PubMed:21884719). Involved in the regulation of lin-35/Rb-mediated apoptosis in the germline (PubMed:21448454).</text>
</comment>
<comment type="catalytic activity">
    <reaction evidence="2">
        <text>(S)-malate(in) + 2-oxoglutarate(out) = (S)-malate(out) + 2-oxoglutarate(in)</text>
        <dbReference type="Rhea" id="RHEA:71587"/>
        <dbReference type="ChEBI" id="CHEBI:15589"/>
        <dbReference type="ChEBI" id="CHEBI:16810"/>
    </reaction>
</comment>
<comment type="catalytic activity">
    <reaction evidence="2">
        <text>malonate(in) + 2-oxoglutarate(out) = malonate(out) + 2-oxoglutarate(in)</text>
        <dbReference type="Rhea" id="RHEA:71591"/>
        <dbReference type="ChEBI" id="CHEBI:15792"/>
        <dbReference type="ChEBI" id="CHEBI:16810"/>
    </reaction>
</comment>
<comment type="catalytic activity">
    <reaction evidence="2">
        <text>succinate(in) + 2-oxoglutarate(out) = succinate(out) + 2-oxoglutarate(in)</text>
        <dbReference type="Rhea" id="RHEA:71595"/>
        <dbReference type="ChEBI" id="CHEBI:16810"/>
        <dbReference type="ChEBI" id="CHEBI:30031"/>
    </reaction>
</comment>
<comment type="catalytic activity">
    <reaction evidence="2">
        <text>maleate(in) + 2-oxoglutarate(out) = maleate(out) + 2-oxoglutarate(in)</text>
        <dbReference type="Rhea" id="RHEA:71599"/>
        <dbReference type="ChEBI" id="CHEBI:16810"/>
        <dbReference type="ChEBI" id="CHEBI:30780"/>
    </reaction>
</comment>
<comment type="catalytic activity">
    <reaction evidence="2">
        <text>oxaloacetate(in) + 2-oxoglutarate(out) = oxaloacetate(out) + 2-oxoglutarate(in)</text>
        <dbReference type="Rhea" id="RHEA:71603"/>
        <dbReference type="ChEBI" id="CHEBI:16452"/>
        <dbReference type="ChEBI" id="CHEBI:16810"/>
    </reaction>
</comment>
<comment type="subunit">
    <text evidence="7">Interacts with ant-1.1 and ced-9.</text>
</comment>
<comment type="subcellular location">
    <subcellularLocation>
        <location evidence="7">Mitochondrion</location>
    </subcellularLocation>
    <subcellularLocation>
        <location evidence="3">Mitochondrion inner membrane</location>
        <topology evidence="3">Multi-pass membrane protein</topology>
    </subcellularLocation>
</comment>
<comment type="tissue specificity">
    <text evidence="7">Ubiquitously expressed, but highly expressed in the anterior pharynx.</text>
</comment>
<comment type="developmental stage">
    <text evidence="7">First expressed in intestinal precursor cells during embryogenesis. Expressed in intestinal and neuronal cells in newly hatched larvae at the L1 stage of development.</text>
</comment>
<comment type="disruption phenotype">
    <text evidence="7 8">Viable, with no visible phenotype (PubMed:21884719). Animals have increased levels of reactive oxygen species along with increased sensitivity to the reactive oxygen species (ROS) generator Jugalone (5-hydroxy-1,4-naphtoquinone) (PubMed:21884719). Conversely, display increased resistance to sodium azide, which is a mitochondrial poison that inhibits cytochrome c (PubMed:21884719). Animals also have morphological defects in their mitochondondria, whereby mitochondria are smaller in size, abnormally shaped, and contain fewer cristae which are irregular and disorganized (PubMed:21448454). Increased germline apoptosis characterized by an increased number of apoptotic corpses in the gonadal arms (PubMed:21448454). RNAi-mediated knockdown results in increased secretion of a beta-type insulin, daf-28 by coelomocytes and longer distal tip processes (PubMed:21448454).</text>
</comment>
<comment type="similarity">
    <text evidence="6">Belongs to the mitochondrial carrier (TC 2.A.29) family.</text>
</comment>
<reference evidence="12" key="1">
    <citation type="journal article" date="1998" name="Science">
        <title>Genome sequence of the nematode C. elegans: a platform for investigating biology.</title>
        <authorList>
            <consortium name="The C. elegans sequencing consortium"/>
        </authorList>
    </citation>
    <scope>NUCLEOTIDE SEQUENCE [LARGE SCALE GENOMIC DNA]</scope>
    <source>
        <strain evidence="12">Bristol N2</strain>
    </source>
</reference>
<reference evidence="11" key="2">
    <citation type="journal article" date="2011" name="Mech. Ageing Dev.">
        <title>Increased longevity of some C. elegans mitochondrial mutants explained by activation of an alternative energy-producing pathway.</title>
        <authorList>
            <person name="Gallo M."/>
            <person name="Park D."/>
            <person name="Riddle D.L."/>
        </authorList>
    </citation>
    <scope>FUNCTION</scope>
    <scope>DISRUPTION PHENOTYPE</scope>
</reference>
<reference evidence="11" key="3">
    <citation type="journal article" date="2011" name="PLoS ONE">
        <title>MISC-1/OGC links mitochondrial metabolism, apoptosis and insulin secretion.</title>
        <authorList>
            <person name="Gallo M."/>
            <person name="Park D."/>
            <person name="Luciani D.S."/>
            <person name="Kida K."/>
            <person name="Palmieri F."/>
            <person name="Blacque O.E."/>
            <person name="Johnson J.D."/>
            <person name="Riddle D.L."/>
        </authorList>
    </citation>
    <scope>FUNCTION</scope>
    <scope>INTERACTION WITH ANT-1.1 AND CED-9</scope>
    <scope>SUBCELLULAR LOCATION</scope>
    <scope>TISSUE SPECIFICITY</scope>
    <scope>DEVELOPMENTAL STAGE</scope>
    <scope>DISRUPTION PHENOTYPE</scope>
</reference>
<name>M2OM_CAEEL</name>
<feature type="chain" id="PRO_0000443420" description="Mitochondrial 2-oxoglutarate/malate carrier protein" evidence="11">
    <location>
        <begin position="1"/>
        <end position="306"/>
    </location>
</feature>
<feature type="transmembrane region" description="Helical; Name=1" evidence="1">
    <location>
        <begin position="9"/>
        <end position="38"/>
    </location>
</feature>
<feature type="transmembrane region" description="Helical; Name=2" evidence="1">
    <location>
        <begin position="72"/>
        <end position="93"/>
    </location>
</feature>
<feature type="transmembrane region" description="Helical; Name=3" evidence="1">
    <location>
        <begin position="108"/>
        <end position="122"/>
    </location>
</feature>
<feature type="transmembrane region" description="Helical; Name=4" evidence="1">
    <location>
        <begin position="172"/>
        <end position="192"/>
    </location>
</feature>
<feature type="transmembrane region" description="Helical; Name=5" evidence="1">
    <location>
        <begin position="205"/>
        <end position="226"/>
    </location>
</feature>
<feature type="transmembrane region" description="Helical; Name=6" evidence="1">
    <location>
        <begin position="268"/>
        <end position="286"/>
    </location>
</feature>
<feature type="repeat" description="Solcar 1" evidence="5">
    <location>
        <begin position="7"/>
        <end position="95"/>
    </location>
</feature>
<feature type="repeat" description="Solcar 2" evidence="5">
    <location>
        <begin position="103"/>
        <end position="194"/>
    </location>
</feature>
<feature type="repeat" description="Solcar 3" evidence="5">
    <location>
        <begin position="203"/>
        <end position="292"/>
    </location>
</feature>
<protein>
    <recommendedName>
        <fullName evidence="4">Mitochondrial 2-oxoglutarate/malate carrier protein</fullName>
        <shortName>alpha-oxoglutarate carrier</shortName>
    </recommendedName>
    <alternativeName>
        <fullName evidence="9">Mitochondrial solute carrier 1</fullName>
        <shortName evidence="9">MISC-1</shortName>
    </alternativeName>
</protein>
<accession>P90992</accession>
<dbReference type="EMBL" id="BX284602">
    <property type="protein sequence ID" value="CCD61938.1"/>
    <property type="molecule type" value="Genomic_DNA"/>
</dbReference>
<dbReference type="PIR" id="T25459">
    <property type="entry name" value="T25459"/>
</dbReference>
<dbReference type="RefSeq" id="NP_493694.2">
    <property type="nucleotide sequence ID" value="NM_061293.6"/>
</dbReference>
<dbReference type="SMR" id="P90992"/>
<dbReference type="FunCoup" id="P90992">
    <property type="interactions" value="1995"/>
</dbReference>
<dbReference type="STRING" id="6239.B0432.4.1"/>
<dbReference type="PaxDb" id="6239-B0432.4.1"/>
<dbReference type="PeptideAtlas" id="P90992"/>
<dbReference type="EnsemblMetazoa" id="B0432.4.1">
    <property type="protein sequence ID" value="B0432.4.1"/>
    <property type="gene ID" value="WBGene00015186"/>
</dbReference>
<dbReference type="GeneID" id="173414"/>
<dbReference type="KEGG" id="cel:CELE_B0432.4"/>
<dbReference type="UCSC" id="B0432.4">
    <property type="organism name" value="c. elegans"/>
</dbReference>
<dbReference type="AGR" id="WB:WBGene00015186"/>
<dbReference type="CTD" id="173414"/>
<dbReference type="WormBase" id="B0432.4">
    <property type="protein sequence ID" value="CE32102"/>
    <property type="gene ID" value="WBGene00015186"/>
    <property type="gene designation" value="misc-1"/>
</dbReference>
<dbReference type="eggNOG" id="KOG0759">
    <property type="taxonomic scope" value="Eukaryota"/>
</dbReference>
<dbReference type="GeneTree" id="ENSGT00940000158465"/>
<dbReference type="HOGENOM" id="CLU_015166_14_1_1"/>
<dbReference type="InParanoid" id="P90992"/>
<dbReference type="OMA" id="TLWRGAI"/>
<dbReference type="OrthoDB" id="448427at2759"/>
<dbReference type="PhylomeDB" id="P90992"/>
<dbReference type="Reactome" id="R-CEL-428643">
    <property type="pathway name" value="Organic anion transporters"/>
</dbReference>
<dbReference type="Reactome" id="R-CEL-9856872">
    <property type="pathway name" value="Malate-aspartate shuttle"/>
</dbReference>
<dbReference type="PRO" id="PR:P90992"/>
<dbReference type="Proteomes" id="UP000001940">
    <property type="component" value="Chromosome II"/>
</dbReference>
<dbReference type="Bgee" id="WBGene00015186">
    <property type="expression patterns" value="Expressed in larva and 4 other cell types or tissues"/>
</dbReference>
<dbReference type="GO" id="GO:0005743">
    <property type="term" value="C:mitochondrial inner membrane"/>
    <property type="evidence" value="ECO:0007669"/>
    <property type="project" value="UniProtKB-SubCell"/>
</dbReference>
<dbReference type="GO" id="GO:0005739">
    <property type="term" value="C:mitochondrion"/>
    <property type="evidence" value="ECO:0000314"/>
    <property type="project" value="WormBase"/>
</dbReference>
<dbReference type="GO" id="GO:0015297">
    <property type="term" value="F:antiporter activity"/>
    <property type="evidence" value="ECO:0007669"/>
    <property type="project" value="UniProtKB-KW"/>
</dbReference>
<dbReference type="GO" id="GO:0022857">
    <property type="term" value="F:transmembrane transporter activity"/>
    <property type="evidence" value="ECO:0000318"/>
    <property type="project" value="GO_Central"/>
</dbReference>
<dbReference type="GO" id="GO:0006869">
    <property type="term" value="P:lipid transport"/>
    <property type="evidence" value="ECO:0007669"/>
    <property type="project" value="UniProtKB-KW"/>
</dbReference>
<dbReference type="FunFam" id="1.50.40.10:FF:000013">
    <property type="entry name" value="Mitochondrial 2-oxoglutarate/malate carrier protein-like protein"/>
    <property type="match status" value="1"/>
</dbReference>
<dbReference type="Gene3D" id="1.50.40.10">
    <property type="entry name" value="Mitochondrial carrier domain"/>
    <property type="match status" value="1"/>
</dbReference>
<dbReference type="InterPro" id="IPR050391">
    <property type="entry name" value="Mito_Metabolite_Transporter"/>
</dbReference>
<dbReference type="InterPro" id="IPR018108">
    <property type="entry name" value="Mitochondrial_sb/sol_carrier"/>
</dbReference>
<dbReference type="InterPro" id="IPR023395">
    <property type="entry name" value="Mt_carrier_dom_sf"/>
</dbReference>
<dbReference type="PANTHER" id="PTHR45618">
    <property type="entry name" value="MITOCHONDRIAL DICARBOXYLATE CARRIER-RELATED"/>
    <property type="match status" value="1"/>
</dbReference>
<dbReference type="Pfam" id="PF00153">
    <property type="entry name" value="Mito_carr"/>
    <property type="match status" value="3"/>
</dbReference>
<dbReference type="SUPFAM" id="SSF103506">
    <property type="entry name" value="Mitochondrial carrier"/>
    <property type="match status" value="1"/>
</dbReference>
<dbReference type="PROSITE" id="PS50920">
    <property type="entry name" value="SOLCAR"/>
    <property type="match status" value="3"/>
</dbReference>
<gene>
    <name evidence="10 13" type="primary">misc-1</name>
    <name evidence="13" type="ORF">B0432.4</name>
</gene>
<proteinExistence type="evidence at protein level"/>
<keyword id="KW-0050">Antiport</keyword>
<keyword id="KW-0445">Lipid transport</keyword>
<keyword id="KW-0472">Membrane</keyword>
<keyword id="KW-0496">Mitochondrion</keyword>
<keyword id="KW-0999">Mitochondrion inner membrane</keyword>
<keyword id="KW-1185">Reference proteome</keyword>
<keyword id="KW-0677">Repeat</keyword>
<keyword id="KW-0812">Transmembrane</keyword>
<keyword id="KW-1133">Transmembrane helix</keyword>
<keyword id="KW-0813">Transport</keyword>
<organism evidence="12">
    <name type="scientific">Caenorhabditis elegans</name>
    <dbReference type="NCBI Taxonomy" id="6239"/>
    <lineage>
        <taxon>Eukaryota</taxon>
        <taxon>Metazoa</taxon>
        <taxon>Ecdysozoa</taxon>
        <taxon>Nematoda</taxon>
        <taxon>Chromadorea</taxon>
        <taxon>Rhabditida</taxon>
        <taxon>Rhabditina</taxon>
        <taxon>Rhabditomorpha</taxon>
        <taxon>Rhabditoidea</taxon>
        <taxon>Rhabditidae</taxon>
        <taxon>Peloderinae</taxon>
        <taxon>Caenorhabditis</taxon>
    </lineage>
</organism>